<comment type="function">
    <text evidence="1">Catalyzes the conversion of uracil and 5-phospho-alpha-D-ribose 1-diphosphate (PRPP) to UMP and diphosphate.</text>
</comment>
<comment type="catalytic activity">
    <reaction evidence="1">
        <text>UMP + diphosphate = 5-phospho-alpha-D-ribose 1-diphosphate + uracil</text>
        <dbReference type="Rhea" id="RHEA:13017"/>
        <dbReference type="ChEBI" id="CHEBI:17568"/>
        <dbReference type="ChEBI" id="CHEBI:33019"/>
        <dbReference type="ChEBI" id="CHEBI:57865"/>
        <dbReference type="ChEBI" id="CHEBI:58017"/>
        <dbReference type="EC" id="2.4.2.9"/>
    </reaction>
</comment>
<comment type="cofactor">
    <cofactor evidence="1">
        <name>Mg(2+)</name>
        <dbReference type="ChEBI" id="CHEBI:18420"/>
    </cofactor>
    <text evidence="1">Binds 1 Mg(2+) ion per subunit. The magnesium is bound as Mg-PRPP.</text>
</comment>
<comment type="activity regulation">
    <text evidence="1">Allosterically activated by GTP.</text>
</comment>
<comment type="pathway">
    <text evidence="1">Pyrimidine metabolism; UMP biosynthesis via salvage pathway; UMP from uracil: step 1/1.</text>
</comment>
<comment type="similarity">
    <text evidence="1">Belongs to the UPRTase family.</text>
</comment>
<sequence>MGKFQVLDHPLIQHKLTIIRNKDCGTRSFREVVNEISTLMAYEVSRDMPLQDKTIETPVAKMTAKELAGKKVAIVPILRAGIGMVDGILELIPAAKVGHIGMYRDEETLQPHEYFVKLPSDIGQRQVFVVDPMLATGGSAIMAIDALKKRGASNIKFVCLVSAPEGVKALREKHPDIDIYTAALDDRLNEDGYIVPGLGDAGDRLFGTK</sequence>
<dbReference type="EC" id="2.4.2.9" evidence="1"/>
<dbReference type="EMBL" id="CP000416">
    <property type="protein sequence ID" value="ABJ64391.1"/>
    <property type="molecule type" value="Genomic_DNA"/>
</dbReference>
<dbReference type="RefSeq" id="WP_011668155.1">
    <property type="nucleotide sequence ID" value="NC_008497.1"/>
</dbReference>
<dbReference type="SMR" id="Q03QY1"/>
<dbReference type="STRING" id="387344.LVIS_1286"/>
<dbReference type="KEGG" id="lbr:LVIS_1286"/>
<dbReference type="PATRIC" id="fig|387344.15.peg.1227"/>
<dbReference type="eggNOG" id="COG0035">
    <property type="taxonomic scope" value="Bacteria"/>
</dbReference>
<dbReference type="HOGENOM" id="CLU_067096_2_2_9"/>
<dbReference type="UniPathway" id="UPA00574">
    <property type="reaction ID" value="UER00636"/>
</dbReference>
<dbReference type="Proteomes" id="UP000001652">
    <property type="component" value="Chromosome"/>
</dbReference>
<dbReference type="GO" id="GO:0005525">
    <property type="term" value="F:GTP binding"/>
    <property type="evidence" value="ECO:0007669"/>
    <property type="project" value="UniProtKB-KW"/>
</dbReference>
<dbReference type="GO" id="GO:0000287">
    <property type="term" value="F:magnesium ion binding"/>
    <property type="evidence" value="ECO:0007669"/>
    <property type="project" value="UniProtKB-UniRule"/>
</dbReference>
<dbReference type="GO" id="GO:0004845">
    <property type="term" value="F:uracil phosphoribosyltransferase activity"/>
    <property type="evidence" value="ECO:0007669"/>
    <property type="project" value="UniProtKB-UniRule"/>
</dbReference>
<dbReference type="GO" id="GO:0044206">
    <property type="term" value="P:UMP salvage"/>
    <property type="evidence" value="ECO:0007669"/>
    <property type="project" value="UniProtKB-UniRule"/>
</dbReference>
<dbReference type="GO" id="GO:0006223">
    <property type="term" value="P:uracil salvage"/>
    <property type="evidence" value="ECO:0007669"/>
    <property type="project" value="InterPro"/>
</dbReference>
<dbReference type="CDD" id="cd06223">
    <property type="entry name" value="PRTases_typeI"/>
    <property type="match status" value="1"/>
</dbReference>
<dbReference type="FunFam" id="3.40.50.2020:FF:000003">
    <property type="entry name" value="Uracil phosphoribosyltransferase"/>
    <property type="match status" value="1"/>
</dbReference>
<dbReference type="Gene3D" id="3.40.50.2020">
    <property type="match status" value="1"/>
</dbReference>
<dbReference type="HAMAP" id="MF_01218_B">
    <property type="entry name" value="Upp_B"/>
    <property type="match status" value="1"/>
</dbReference>
<dbReference type="InterPro" id="IPR000836">
    <property type="entry name" value="PRibTrfase_dom"/>
</dbReference>
<dbReference type="InterPro" id="IPR029057">
    <property type="entry name" value="PRTase-like"/>
</dbReference>
<dbReference type="InterPro" id="IPR034332">
    <property type="entry name" value="Upp_B"/>
</dbReference>
<dbReference type="InterPro" id="IPR050054">
    <property type="entry name" value="UPRTase/APRTase"/>
</dbReference>
<dbReference type="InterPro" id="IPR005765">
    <property type="entry name" value="Ura_phspho_trans"/>
</dbReference>
<dbReference type="NCBIfam" id="NF001097">
    <property type="entry name" value="PRK00129.1"/>
    <property type="match status" value="1"/>
</dbReference>
<dbReference type="NCBIfam" id="TIGR01091">
    <property type="entry name" value="upp"/>
    <property type="match status" value="1"/>
</dbReference>
<dbReference type="PANTHER" id="PTHR32315">
    <property type="entry name" value="ADENINE PHOSPHORIBOSYLTRANSFERASE"/>
    <property type="match status" value="1"/>
</dbReference>
<dbReference type="PANTHER" id="PTHR32315:SF4">
    <property type="entry name" value="URACIL PHOSPHORIBOSYLTRANSFERASE, CHLOROPLASTIC"/>
    <property type="match status" value="1"/>
</dbReference>
<dbReference type="Pfam" id="PF14681">
    <property type="entry name" value="UPRTase"/>
    <property type="match status" value="1"/>
</dbReference>
<dbReference type="SUPFAM" id="SSF53271">
    <property type="entry name" value="PRTase-like"/>
    <property type="match status" value="1"/>
</dbReference>
<evidence type="ECO:0000255" key="1">
    <source>
        <dbReference type="HAMAP-Rule" id="MF_01218"/>
    </source>
</evidence>
<organism>
    <name type="scientific">Levilactobacillus brevis (strain ATCC 367 / BCRC 12310 / CIP 105137 / JCM 1170 / LMG 11437 / NCIMB 947 / NCTC 947)</name>
    <name type="common">Lactobacillus brevis</name>
    <dbReference type="NCBI Taxonomy" id="387344"/>
    <lineage>
        <taxon>Bacteria</taxon>
        <taxon>Bacillati</taxon>
        <taxon>Bacillota</taxon>
        <taxon>Bacilli</taxon>
        <taxon>Lactobacillales</taxon>
        <taxon>Lactobacillaceae</taxon>
        <taxon>Levilactobacillus</taxon>
    </lineage>
</organism>
<feature type="chain" id="PRO_1000053728" description="Uracil phosphoribosyltransferase">
    <location>
        <begin position="1"/>
        <end position="209"/>
    </location>
</feature>
<feature type="binding site" evidence="1">
    <location>
        <position position="79"/>
    </location>
    <ligand>
        <name>5-phospho-alpha-D-ribose 1-diphosphate</name>
        <dbReference type="ChEBI" id="CHEBI:58017"/>
    </ligand>
</feature>
<feature type="binding site" evidence="1">
    <location>
        <position position="104"/>
    </location>
    <ligand>
        <name>5-phospho-alpha-D-ribose 1-diphosphate</name>
        <dbReference type="ChEBI" id="CHEBI:58017"/>
    </ligand>
</feature>
<feature type="binding site" evidence="1">
    <location>
        <begin position="131"/>
        <end position="139"/>
    </location>
    <ligand>
        <name>5-phospho-alpha-D-ribose 1-diphosphate</name>
        <dbReference type="ChEBI" id="CHEBI:58017"/>
    </ligand>
</feature>
<feature type="binding site" evidence="1">
    <location>
        <position position="194"/>
    </location>
    <ligand>
        <name>uracil</name>
        <dbReference type="ChEBI" id="CHEBI:17568"/>
    </ligand>
</feature>
<feature type="binding site" evidence="1">
    <location>
        <begin position="199"/>
        <end position="201"/>
    </location>
    <ligand>
        <name>uracil</name>
        <dbReference type="ChEBI" id="CHEBI:17568"/>
    </ligand>
</feature>
<feature type="binding site" evidence="1">
    <location>
        <position position="200"/>
    </location>
    <ligand>
        <name>5-phospho-alpha-D-ribose 1-diphosphate</name>
        <dbReference type="ChEBI" id="CHEBI:58017"/>
    </ligand>
</feature>
<proteinExistence type="inferred from homology"/>
<keyword id="KW-0021">Allosteric enzyme</keyword>
<keyword id="KW-0328">Glycosyltransferase</keyword>
<keyword id="KW-0342">GTP-binding</keyword>
<keyword id="KW-0460">Magnesium</keyword>
<keyword id="KW-0547">Nucleotide-binding</keyword>
<keyword id="KW-1185">Reference proteome</keyword>
<keyword id="KW-0808">Transferase</keyword>
<accession>Q03QY1</accession>
<reference key="1">
    <citation type="journal article" date="2006" name="Proc. Natl. Acad. Sci. U.S.A.">
        <title>Comparative genomics of the lactic acid bacteria.</title>
        <authorList>
            <person name="Makarova K.S."/>
            <person name="Slesarev A."/>
            <person name="Wolf Y.I."/>
            <person name="Sorokin A."/>
            <person name="Mirkin B."/>
            <person name="Koonin E.V."/>
            <person name="Pavlov A."/>
            <person name="Pavlova N."/>
            <person name="Karamychev V."/>
            <person name="Polouchine N."/>
            <person name="Shakhova V."/>
            <person name="Grigoriev I."/>
            <person name="Lou Y."/>
            <person name="Rohksar D."/>
            <person name="Lucas S."/>
            <person name="Huang K."/>
            <person name="Goodstein D.M."/>
            <person name="Hawkins T."/>
            <person name="Plengvidhya V."/>
            <person name="Welker D."/>
            <person name="Hughes J."/>
            <person name="Goh Y."/>
            <person name="Benson A."/>
            <person name="Baldwin K."/>
            <person name="Lee J.-H."/>
            <person name="Diaz-Muniz I."/>
            <person name="Dosti B."/>
            <person name="Smeianov V."/>
            <person name="Wechter W."/>
            <person name="Barabote R."/>
            <person name="Lorca G."/>
            <person name="Altermann E."/>
            <person name="Barrangou R."/>
            <person name="Ganesan B."/>
            <person name="Xie Y."/>
            <person name="Rawsthorne H."/>
            <person name="Tamir D."/>
            <person name="Parker C."/>
            <person name="Breidt F."/>
            <person name="Broadbent J.R."/>
            <person name="Hutkins R."/>
            <person name="O'Sullivan D."/>
            <person name="Steele J."/>
            <person name="Unlu G."/>
            <person name="Saier M.H. Jr."/>
            <person name="Klaenhammer T."/>
            <person name="Richardson P."/>
            <person name="Kozyavkin S."/>
            <person name="Weimer B.C."/>
            <person name="Mills D.A."/>
        </authorList>
    </citation>
    <scope>NUCLEOTIDE SEQUENCE [LARGE SCALE GENOMIC DNA]</scope>
    <source>
        <strain>ATCC 367 / BCRC 12310 / CIP 105137 / JCM 1170 / LMG 11437 / NCIMB 947 / NCTC 947</strain>
    </source>
</reference>
<gene>
    <name evidence="1" type="primary">upp</name>
    <name type="ordered locus">LVIS_1286</name>
</gene>
<protein>
    <recommendedName>
        <fullName evidence="1">Uracil phosphoribosyltransferase</fullName>
        <ecNumber evidence="1">2.4.2.9</ecNumber>
    </recommendedName>
    <alternativeName>
        <fullName evidence="1">UMP pyrophosphorylase</fullName>
    </alternativeName>
    <alternativeName>
        <fullName evidence="1">UPRTase</fullName>
    </alternativeName>
</protein>
<name>UPP_LEVBA</name>